<accession>B2U0Z1</accession>
<dbReference type="EC" id="2.8.1.-" evidence="1"/>
<dbReference type="EMBL" id="CP001063">
    <property type="protein sequence ID" value="ACD08371.1"/>
    <property type="molecule type" value="Genomic_DNA"/>
</dbReference>
<dbReference type="RefSeq" id="WP_001157416.1">
    <property type="nucleotide sequence ID" value="NC_010658.1"/>
</dbReference>
<dbReference type="SMR" id="B2U0Z1"/>
<dbReference type="STRING" id="344609.SbBS512_E1589"/>
<dbReference type="KEGG" id="sbc:SbBS512_E1589"/>
<dbReference type="HOGENOM" id="CLU_026481_0_0_6"/>
<dbReference type="Proteomes" id="UP000001030">
    <property type="component" value="Chromosome"/>
</dbReference>
<dbReference type="GO" id="GO:0005737">
    <property type="term" value="C:cytoplasm"/>
    <property type="evidence" value="ECO:0007669"/>
    <property type="project" value="UniProtKB-SubCell"/>
</dbReference>
<dbReference type="GO" id="GO:0051539">
    <property type="term" value="F:4 iron, 4 sulfur cluster binding"/>
    <property type="evidence" value="ECO:0007669"/>
    <property type="project" value="UniProtKB-UniRule"/>
</dbReference>
<dbReference type="GO" id="GO:0005524">
    <property type="term" value="F:ATP binding"/>
    <property type="evidence" value="ECO:0007669"/>
    <property type="project" value="UniProtKB-UniRule"/>
</dbReference>
<dbReference type="GO" id="GO:0000287">
    <property type="term" value="F:magnesium ion binding"/>
    <property type="evidence" value="ECO:0007669"/>
    <property type="project" value="UniProtKB-UniRule"/>
</dbReference>
<dbReference type="GO" id="GO:0016783">
    <property type="term" value="F:sulfurtransferase activity"/>
    <property type="evidence" value="ECO:0007669"/>
    <property type="project" value="UniProtKB-UniRule"/>
</dbReference>
<dbReference type="GO" id="GO:0000049">
    <property type="term" value="F:tRNA binding"/>
    <property type="evidence" value="ECO:0007669"/>
    <property type="project" value="UniProtKB-KW"/>
</dbReference>
<dbReference type="GO" id="GO:0034227">
    <property type="term" value="P:tRNA thio-modification"/>
    <property type="evidence" value="ECO:0007669"/>
    <property type="project" value="UniProtKB-UniRule"/>
</dbReference>
<dbReference type="CDD" id="cd24138">
    <property type="entry name" value="TtcA-like"/>
    <property type="match status" value="1"/>
</dbReference>
<dbReference type="FunFam" id="3.40.50.620:FF:000046">
    <property type="entry name" value="tRNA-cytidine(32) 2-sulfurtransferase"/>
    <property type="match status" value="1"/>
</dbReference>
<dbReference type="Gene3D" id="3.40.50.620">
    <property type="entry name" value="HUPs"/>
    <property type="match status" value="1"/>
</dbReference>
<dbReference type="HAMAP" id="MF_01850">
    <property type="entry name" value="TtcA"/>
    <property type="match status" value="1"/>
</dbReference>
<dbReference type="InterPro" id="IPR014729">
    <property type="entry name" value="Rossmann-like_a/b/a_fold"/>
</dbReference>
<dbReference type="InterPro" id="IPR011063">
    <property type="entry name" value="TilS/TtcA_N"/>
</dbReference>
<dbReference type="InterPro" id="IPR012089">
    <property type="entry name" value="tRNA_Cyd_32_2_STrfase"/>
</dbReference>
<dbReference type="InterPro" id="IPR035107">
    <property type="entry name" value="tRNA_thiolation_TtcA_Ctu1"/>
</dbReference>
<dbReference type="NCBIfam" id="NF007972">
    <property type="entry name" value="PRK10696.1"/>
    <property type="match status" value="1"/>
</dbReference>
<dbReference type="PANTHER" id="PTHR43686:SF1">
    <property type="entry name" value="AMINOTRAN_5 DOMAIN-CONTAINING PROTEIN"/>
    <property type="match status" value="1"/>
</dbReference>
<dbReference type="PANTHER" id="PTHR43686">
    <property type="entry name" value="SULFURTRANSFERASE-RELATED"/>
    <property type="match status" value="1"/>
</dbReference>
<dbReference type="Pfam" id="PF01171">
    <property type="entry name" value="ATP_bind_3"/>
    <property type="match status" value="1"/>
</dbReference>
<dbReference type="PIRSF" id="PIRSF004976">
    <property type="entry name" value="ATPase_YdaO"/>
    <property type="match status" value="1"/>
</dbReference>
<dbReference type="SUPFAM" id="SSF52402">
    <property type="entry name" value="Adenine nucleotide alpha hydrolases-like"/>
    <property type="match status" value="1"/>
</dbReference>
<evidence type="ECO:0000255" key="1">
    <source>
        <dbReference type="HAMAP-Rule" id="MF_01850"/>
    </source>
</evidence>
<name>TTCA_SHIB3</name>
<comment type="function">
    <text evidence="1">Catalyzes the ATP-dependent 2-thiolation of cytidine in position 32 of tRNA, to form 2-thiocytidine (s(2)C32). The sulfur atoms are provided by the cysteine/cysteine desulfurase (IscS) system.</text>
</comment>
<comment type="catalytic activity">
    <reaction evidence="1">
        <text>cytidine(32) in tRNA + S-sulfanyl-L-cysteinyl-[cysteine desulfurase] + AH2 + ATP = 2-thiocytidine(32) in tRNA + L-cysteinyl-[cysteine desulfurase] + A + AMP + diphosphate + H(+)</text>
        <dbReference type="Rhea" id="RHEA:57048"/>
        <dbReference type="Rhea" id="RHEA-COMP:10288"/>
        <dbReference type="Rhea" id="RHEA-COMP:12157"/>
        <dbReference type="Rhea" id="RHEA-COMP:12158"/>
        <dbReference type="Rhea" id="RHEA-COMP:14821"/>
        <dbReference type="ChEBI" id="CHEBI:13193"/>
        <dbReference type="ChEBI" id="CHEBI:15378"/>
        <dbReference type="ChEBI" id="CHEBI:17499"/>
        <dbReference type="ChEBI" id="CHEBI:29950"/>
        <dbReference type="ChEBI" id="CHEBI:30616"/>
        <dbReference type="ChEBI" id="CHEBI:33019"/>
        <dbReference type="ChEBI" id="CHEBI:61963"/>
        <dbReference type="ChEBI" id="CHEBI:82748"/>
        <dbReference type="ChEBI" id="CHEBI:141453"/>
        <dbReference type="ChEBI" id="CHEBI:456215"/>
    </reaction>
    <physiologicalReaction direction="left-to-right" evidence="1">
        <dbReference type="Rhea" id="RHEA:57049"/>
    </physiologicalReaction>
</comment>
<comment type="cofactor">
    <cofactor evidence="1">
        <name>Mg(2+)</name>
        <dbReference type="ChEBI" id="CHEBI:18420"/>
    </cofactor>
</comment>
<comment type="cofactor">
    <cofactor evidence="1">
        <name>[4Fe-4S] cluster</name>
        <dbReference type="ChEBI" id="CHEBI:49883"/>
    </cofactor>
    <text evidence="1">Binds 1 [4Fe-4S] cluster per subunit. The cluster is chelated by three Cys residues, the fourth Fe has a free coordination site that may bind a sulfur atom transferred from the persulfide of IscS.</text>
</comment>
<comment type="pathway">
    <text evidence="1">tRNA modification.</text>
</comment>
<comment type="subunit">
    <text evidence="1">Homodimer.</text>
</comment>
<comment type="subcellular location">
    <subcellularLocation>
        <location evidence="1">Cytoplasm</location>
    </subcellularLocation>
</comment>
<comment type="miscellaneous">
    <text evidence="1">The thiolation reaction likely consists of two steps: a first activation step by ATP to form an adenylated intermediate of the target base of tRNA, and a second nucleophilic substitution step of the sulfur (S) atom supplied by the hydrosulfide attached to the Fe-S cluster.</text>
</comment>
<comment type="similarity">
    <text evidence="1">Belongs to the TtcA family.</text>
</comment>
<proteinExistence type="inferred from homology"/>
<protein>
    <recommendedName>
        <fullName evidence="1">tRNA-cytidine(32) 2-sulfurtransferase</fullName>
        <ecNumber evidence="1">2.8.1.-</ecNumber>
    </recommendedName>
    <alternativeName>
        <fullName evidence="1">Two-thiocytidine biosynthesis protein A</fullName>
    </alternativeName>
    <alternativeName>
        <fullName evidence="1">tRNA 2-thiocytidine biosynthesis protein TtcA</fullName>
    </alternativeName>
</protein>
<organism>
    <name type="scientific">Shigella boydii serotype 18 (strain CDC 3083-94 / BS512)</name>
    <dbReference type="NCBI Taxonomy" id="344609"/>
    <lineage>
        <taxon>Bacteria</taxon>
        <taxon>Pseudomonadati</taxon>
        <taxon>Pseudomonadota</taxon>
        <taxon>Gammaproteobacteria</taxon>
        <taxon>Enterobacterales</taxon>
        <taxon>Enterobacteriaceae</taxon>
        <taxon>Shigella</taxon>
    </lineage>
</organism>
<gene>
    <name evidence="1" type="primary">ttcA</name>
    <name type="ordered locus">SbBS512_E1589</name>
</gene>
<reference key="1">
    <citation type="submission" date="2008-05" db="EMBL/GenBank/DDBJ databases">
        <title>Complete sequence of Shigella boydii serotype 18 strain BS512.</title>
        <authorList>
            <person name="Rasko D.A."/>
            <person name="Rosovitz M."/>
            <person name="Maurelli A.T."/>
            <person name="Myers G."/>
            <person name="Seshadri R."/>
            <person name="Cer R."/>
            <person name="Jiang L."/>
            <person name="Ravel J."/>
            <person name="Sebastian Y."/>
        </authorList>
    </citation>
    <scope>NUCLEOTIDE SEQUENCE [LARGE SCALE GENOMIC DNA]</scope>
    <source>
        <strain>CDC 3083-94 / BS512</strain>
    </source>
</reference>
<keyword id="KW-0004">4Fe-4S</keyword>
<keyword id="KW-0067">ATP-binding</keyword>
<keyword id="KW-0963">Cytoplasm</keyword>
<keyword id="KW-0408">Iron</keyword>
<keyword id="KW-0411">Iron-sulfur</keyword>
<keyword id="KW-0460">Magnesium</keyword>
<keyword id="KW-0479">Metal-binding</keyword>
<keyword id="KW-0547">Nucleotide-binding</keyword>
<keyword id="KW-1185">Reference proteome</keyword>
<keyword id="KW-0694">RNA-binding</keyword>
<keyword id="KW-0808">Transferase</keyword>
<keyword id="KW-0819">tRNA processing</keyword>
<keyword id="KW-0820">tRNA-binding</keyword>
<sequence length="311" mass="35499">MQENQQITKKEQYNLNKLQKRLRRNVGEAIADFNMIEEGDRIMVCLSGGKDSYTMLEILRNLQQSAPINFSLVAVNLDQKQPGFPEHVLPVYLEKLGVEYKIVEENTYGIVKEKIPEGKTTCSLCSRLRRGILYRTATELGATKIALGHHRDDILQTLFLNMFYGGKMKGMPPKLMSDDGKHIVIRPLAYCREKDIQRFADAKAFPIIPCNLCGSQPNLQRQVIADMLRDWDKRYPGRIETMFSAMQNVVPSHLCDTNLFDFKGITHGSEVVNGGDLAFDREEIPLQPAGWQPEEEENQLDELRLNVVEVK</sequence>
<feature type="chain" id="PRO_0000348848" description="tRNA-cytidine(32) 2-sulfurtransferase">
    <location>
        <begin position="1"/>
        <end position="311"/>
    </location>
</feature>
<feature type="short sequence motif" description="PP-loop motif" evidence="1">
    <location>
        <begin position="47"/>
        <end position="52"/>
    </location>
</feature>
<feature type="binding site" evidence="1">
    <location>
        <position position="122"/>
    </location>
    <ligand>
        <name>[4Fe-4S] cluster</name>
        <dbReference type="ChEBI" id="CHEBI:49883"/>
    </ligand>
</feature>
<feature type="binding site" evidence="1">
    <location>
        <position position="125"/>
    </location>
    <ligand>
        <name>[4Fe-4S] cluster</name>
        <dbReference type="ChEBI" id="CHEBI:49883"/>
    </ligand>
</feature>
<feature type="binding site" evidence="1">
    <location>
        <position position="213"/>
    </location>
    <ligand>
        <name>[4Fe-4S] cluster</name>
        <dbReference type="ChEBI" id="CHEBI:49883"/>
    </ligand>
</feature>